<evidence type="ECO:0000250" key="1"/>
<evidence type="ECO:0000255" key="2"/>
<evidence type="ECO:0000305" key="3"/>
<dbReference type="EMBL" id="AP009324">
    <property type="protein sequence ID" value="BAF77507.1"/>
    <property type="molecule type" value="Genomic_DNA"/>
</dbReference>
<dbReference type="RefSeq" id="WP_000616642.1">
    <property type="nucleotide sequence ID" value="NZ_CTYB01000002.1"/>
</dbReference>
<dbReference type="SMR" id="A7WZ82"/>
<dbReference type="KEGG" id="saw:SAHV_0624"/>
<dbReference type="HOGENOM" id="CLU_125825_1_3_9"/>
<dbReference type="GO" id="GO:0005886">
    <property type="term" value="C:plasma membrane"/>
    <property type="evidence" value="ECO:0007669"/>
    <property type="project" value="UniProtKB-SubCell"/>
</dbReference>
<dbReference type="GO" id="GO:0015385">
    <property type="term" value="F:sodium:proton antiporter activity"/>
    <property type="evidence" value="ECO:0007669"/>
    <property type="project" value="TreeGrafter"/>
</dbReference>
<dbReference type="InterPro" id="IPR007208">
    <property type="entry name" value="MrpF/PhaF-like"/>
</dbReference>
<dbReference type="NCBIfam" id="NF009300">
    <property type="entry name" value="PRK12657.1"/>
    <property type="match status" value="1"/>
</dbReference>
<dbReference type="PANTHER" id="PTHR34702">
    <property type="entry name" value="NA(+)/H(+) ANTIPORTER SUBUNIT F1"/>
    <property type="match status" value="1"/>
</dbReference>
<dbReference type="PANTHER" id="PTHR34702:SF1">
    <property type="entry name" value="NA(+)_H(+) ANTIPORTER SUBUNIT F"/>
    <property type="match status" value="1"/>
</dbReference>
<dbReference type="Pfam" id="PF04066">
    <property type="entry name" value="MrpF_PhaF"/>
    <property type="match status" value="1"/>
</dbReference>
<dbReference type="PIRSF" id="PIRSF028784">
    <property type="entry name" value="MrpF"/>
    <property type="match status" value="1"/>
</dbReference>
<feature type="chain" id="PRO_0000372197" description="Putative antiporter subunit mnhF2">
    <location>
        <begin position="1"/>
        <end position="100"/>
    </location>
</feature>
<feature type="transmembrane region" description="Helical" evidence="2">
    <location>
        <begin position="5"/>
        <end position="25"/>
    </location>
</feature>
<feature type="transmembrane region" description="Helical" evidence="2">
    <location>
        <begin position="38"/>
        <end position="60"/>
    </location>
</feature>
<feature type="transmembrane region" description="Helical" evidence="2">
    <location>
        <begin position="70"/>
        <end position="92"/>
    </location>
</feature>
<name>MNHF2_STAA1</name>
<sequence length="100" mass="10730">MIQTITHIMIISSLIIFGIALIICLFRLIKGPTTADRVVTFDTTSAVVMSIVGVLSVLMGTVSFLDSIMLIAIISFVSSVSISRFIGGGHVFNGNNKRNL</sequence>
<comment type="subunit">
    <text evidence="1">May form a heterooligomeric complex that consists of seven subunits: mnhA2, mnhB2, mnhC2, mnhD2, mnhE2, mnhF2 and mnhG2.</text>
</comment>
<comment type="subcellular location">
    <subcellularLocation>
        <location evidence="3">Cell membrane</location>
        <topology evidence="3">Multi-pass membrane protein</topology>
    </subcellularLocation>
</comment>
<comment type="similarity">
    <text evidence="3">Belongs to the CPA3 antiporters (TC 2.A.63) subunit F family.</text>
</comment>
<reference key="1">
    <citation type="journal article" date="2008" name="Antimicrob. Agents Chemother.">
        <title>Mutated response regulator graR is responsible for phenotypic conversion of Staphylococcus aureus from heterogeneous vancomycin-intermediate resistance to vancomycin-intermediate resistance.</title>
        <authorList>
            <person name="Neoh H.-M."/>
            <person name="Cui L."/>
            <person name="Yuzawa H."/>
            <person name="Takeuchi F."/>
            <person name="Matsuo M."/>
            <person name="Hiramatsu K."/>
        </authorList>
    </citation>
    <scope>NUCLEOTIDE SEQUENCE [LARGE SCALE GENOMIC DNA]</scope>
    <source>
        <strain>Mu3 / ATCC 700698</strain>
    </source>
</reference>
<keyword id="KW-0050">Antiport</keyword>
<keyword id="KW-1003">Cell membrane</keyword>
<keyword id="KW-0406">Ion transport</keyword>
<keyword id="KW-0472">Membrane</keyword>
<keyword id="KW-0812">Transmembrane</keyword>
<keyword id="KW-1133">Transmembrane helix</keyword>
<keyword id="KW-0813">Transport</keyword>
<protein>
    <recommendedName>
        <fullName>Putative antiporter subunit mnhF2</fullName>
    </recommendedName>
    <alternativeName>
        <fullName>Mrp complex subunit F2</fullName>
    </alternativeName>
    <alternativeName>
        <fullName>Putative NADH-ubiquinone oxidoreductase subunit mnhF2</fullName>
    </alternativeName>
</protein>
<accession>A7WZ82</accession>
<proteinExistence type="inferred from homology"/>
<organism>
    <name type="scientific">Staphylococcus aureus (strain Mu3 / ATCC 700698)</name>
    <dbReference type="NCBI Taxonomy" id="418127"/>
    <lineage>
        <taxon>Bacteria</taxon>
        <taxon>Bacillati</taxon>
        <taxon>Bacillota</taxon>
        <taxon>Bacilli</taxon>
        <taxon>Bacillales</taxon>
        <taxon>Staphylococcaceae</taxon>
        <taxon>Staphylococcus</taxon>
    </lineage>
</organism>
<gene>
    <name type="primary">mnhF2</name>
    <name type="synonym">mrpF2</name>
    <name type="ordered locus">SAHV_0624</name>
</gene>